<evidence type="ECO:0000255" key="1">
    <source>
        <dbReference type="HAMAP-Rule" id="MF_00318"/>
    </source>
</evidence>
<comment type="function">
    <text evidence="1">Catalyzes the reversible conversion of 2-phosphoglycerate (2-PG) into phosphoenolpyruvate (PEP). It is essential for the degradation of carbohydrates via glycolysis.</text>
</comment>
<comment type="catalytic activity">
    <reaction evidence="1">
        <text>(2R)-2-phosphoglycerate = phosphoenolpyruvate + H2O</text>
        <dbReference type="Rhea" id="RHEA:10164"/>
        <dbReference type="ChEBI" id="CHEBI:15377"/>
        <dbReference type="ChEBI" id="CHEBI:58289"/>
        <dbReference type="ChEBI" id="CHEBI:58702"/>
        <dbReference type="EC" id="4.2.1.11"/>
    </reaction>
</comment>
<comment type="cofactor">
    <cofactor evidence="1">
        <name>Mg(2+)</name>
        <dbReference type="ChEBI" id="CHEBI:18420"/>
    </cofactor>
    <text evidence="1">Binds a second Mg(2+) ion via substrate during catalysis.</text>
</comment>
<comment type="pathway">
    <text evidence="1">Carbohydrate degradation; glycolysis; pyruvate from D-glyceraldehyde 3-phosphate: step 4/5.</text>
</comment>
<comment type="subcellular location">
    <subcellularLocation>
        <location evidence="1">Cytoplasm</location>
    </subcellularLocation>
    <subcellularLocation>
        <location evidence="1">Secreted</location>
    </subcellularLocation>
    <subcellularLocation>
        <location evidence="1">Cell surface</location>
    </subcellularLocation>
    <text evidence="1">Fractions of enolase are present in both the cytoplasm and on the cell surface.</text>
</comment>
<comment type="similarity">
    <text evidence="1">Belongs to the enolase family.</text>
</comment>
<reference key="1">
    <citation type="journal article" date="2006" name="Environ. Microbiol.">
        <title>Whole genome analysis of the marine Bacteroidetes'Gramella forsetii' reveals adaptations to degradation of polymeric organic matter.</title>
        <authorList>
            <person name="Bauer M."/>
            <person name="Kube M."/>
            <person name="Teeling H."/>
            <person name="Richter M."/>
            <person name="Lombardot T."/>
            <person name="Allers E."/>
            <person name="Wuerdemann C.A."/>
            <person name="Quast C."/>
            <person name="Kuhl H."/>
            <person name="Knaust F."/>
            <person name="Woebken D."/>
            <person name="Bischof K."/>
            <person name="Mussmann M."/>
            <person name="Choudhuri J.V."/>
            <person name="Meyer F."/>
            <person name="Reinhardt R."/>
            <person name="Amann R.I."/>
            <person name="Gloeckner F.O."/>
        </authorList>
    </citation>
    <scope>NUCLEOTIDE SEQUENCE [LARGE SCALE GENOMIC DNA]</scope>
    <source>
        <strain>DSM 17595 / CGMCC 1.15422 / KT0803</strain>
    </source>
</reference>
<name>ENO_CHRFK</name>
<protein>
    <recommendedName>
        <fullName evidence="1">Enolase</fullName>
        <ecNumber evidence="1">4.2.1.11</ecNumber>
    </recommendedName>
    <alternativeName>
        <fullName evidence="1">2-phospho-D-glycerate hydro-lyase</fullName>
    </alternativeName>
    <alternativeName>
        <fullName evidence="1">2-phosphoglycerate dehydratase</fullName>
    </alternativeName>
</protein>
<gene>
    <name evidence="1" type="primary">eno</name>
    <name type="ordered locus">GFO_2809</name>
</gene>
<organism>
    <name type="scientific">Christiangramia forsetii (strain DSM 17595 / CGMCC 1.15422 / KT0803)</name>
    <name type="common">Gramella forsetii</name>
    <dbReference type="NCBI Taxonomy" id="411154"/>
    <lineage>
        <taxon>Bacteria</taxon>
        <taxon>Pseudomonadati</taxon>
        <taxon>Bacteroidota</taxon>
        <taxon>Flavobacteriia</taxon>
        <taxon>Flavobacteriales</taxon>
        <taxon>Flavobacteriaceae</taxon>
        <taxon>Christiangramia</taxon>
    </lineage>
</organism>
<keyword id="KW-0963">Cytoplasm</keyword>
<keyword id="KW-0324">Glycolysis</keyword>
<keyword id="KW-0456">Lyase</keyword>
<keyword id="KW-0460">Magnesium</keyword>
<keyword id="KW-0479">Metal-binding</keyword>
<keyword id="KW-0964">Secreted</keyword>
<dbReference type="EC" id="4.2.1.11" evidence="1"/>
<dbReference type="EMBL" id="CU207366">
    <property type="protein sequence ID" value="CAL67763.1"/>
    <property type="molecule type" value="Genomic_DNA"/>
</dbReference>
<dbReference type="RefSeq" id="WP_011710666.1">
    <property type="nucleotide sequence ID" value="NC_008571.1"/>
</dbReference>
<dbReference type="SMR" id="A0M568"/>
<dbReference type="STRING" id="411154.GFO_2809"/>
<dbReference type="KEGG" id="gfo:GFO_2809"/>
<dbReference type="eggNOG" id="COG0148">
    <property type="taxonomic scope" value="Bacteria"/>
</dbReference>
<dbReference type="HOGENOM" id="CLU_031223_2_1_10"/>
<dbReference type="OrthoDB" id="9804716at2"/>
<dbReference type="UniPathway" id="UPA00109">
    <property type="reaction ID" value="UER00187"/>
</dbReference>
<dbReference type="Proteomes" id="UP000000755">
    <property type="component" value="Chromosome"/>
</dbReference>
<dbReference type="GO" id="GO:0009986">
    <property type="term" value="C:cell surface"/>
    <property type="evidence" value="ECO:0007669"/>
    <property type="project" value="UniProtKB-SubCell"/>
</dbReference>
<dbReference type="GO" id="GO:0005576">
    <property type="term" value="C:extracellular region"/>
    <property type="evidence" value="ECO:0007669"/>
    <property type="project" value="UniProtKB-SubCell"/>
</dbReference>
<dbReference type="GO" id="GO:0000015">
    <property type="term" value="C:phosphopyruvate hydratase complex"/>
    <property type="evidence" value="ECO:0007669"/>
    <property type="project" value="InterPro"/>
</dbReference>
<dbReference type="GO" id="GO:0000287">
    <property type="term" value="F:magnesium ion binding"/>
    <property type="evidence" value="ECO:0007669"/>
    <property type="project" value="UniProtKB-UniRule"/>
</dbReference>
<dbReference type="GO" id="GO:0004634">
    <property type="term" value="F:phosphopyruvate hydratase activity"/>
    <property type="evidence" value="ECO:0007669"/>
    <property type="project" value="UniProtKB-UniRule"/>
</dbReference>
<dbReference type="GO" id="GO:0006096">
    <property type="term" value="P:glycolytic process"/>
    <property type="evidence" value="ECO:0007669"/>
    <property type="project" value="UniProtKB-UniRule"/>
</dbReference>
<dbReference type="CDD" id="cd03313">
    <property type="entry name" value="enolase"/>
    <property type="match status" value="1"/>
</dbReference>
<dbReference type="FunFam" id="3.20.20.120:FF:000001">
    <property type="entry name" value="Enolase"/>
    <property type="match status" value="1"/>
</dbReference>
<dbReference type="FunFam" id="3.30.390.10:FF:000001">
    <property type="entry name" value="Enolase"/>
    <property type="match status" value="1"/>
</dbReference>
<dbReference type="Gene3D" id="3.20.20.120">
    <property type="entry name" value="Enolase-like C-terminal domain"/>
    <property type="match status" value="1"/>
</dbReference>
<dbReference type="Gene3D" id="3.30.390.10">
    <property type="entry name" value="Enolase-like, N-terminal domain"/>
    <property type="match status" value="1"/>
</dbReference>
<dbReference type="HAMAP" id="MF_00318">
    <property type="entry name" value="Enolase"/>
    <property type="match status" value="1"/>
</dbReference>
<dbReference type="InterPro" id="IPR000941">
    <property type="entry name" value="Enolase"/>
</dbReference>
<dbReference type="InterPro" id="IPR036849">
    <property type="entry name" value="Enolase-like_C_sf"/>
</dbReference>
<dbReference type="InterPro" id="IPR029017">
    <property type="entry name" value="Enolase-like_N"/>
</dbReference>
<dbReference type="InterPro" id="IPR020810">
    <property type="entry name" value="Enolase_C"/>
</dbReference>
<dbReference type="InterPro" id="IPR020809">
    <property type="entry name" value="Enolase_CS"/>
</dbReference>
<dbReference type="InterPro" id="IPR020811">
    <property type="entry name" value="Enolase_N"/>
</dbReference>
<dbReference type="NCBIfam" id="TIGR01060">
    <property type="entry name" value="eno"/>
    <property type="match status" value="1"/>
</dbReference>
<dbReference type="PANTHER" id="PTHR11902">
    <property type="entry name" value="ENOLASE"/>
    <property type="match status" value="1"/>
</dbReference>
<dbReference type="PANTHER" id="PTHR11902:SF1">
    <property type="entry name" value="ENOLASE"/>
    <property type="match status" value="1"/>
</dbReference>
<dbReference type="Pfam" id="PF00113">
    <property type="entry name" value="Enolase_C"/>
    <property type="match status" value="1"/>
</dbReference>
<dbReference type="Pfam" id="PF03952">
    <property type="entry name" value="Enolase_N"/>
    <property type="match status" value="1"/>
</dbReference>
<dbReference type="PIRSF" id="PIRSF001400">
    <property type="entry name" value="Enolase"/>
    <property type="match status" value="1"/>
</dbReference>
<dbReference type="PRINTS" id="PR00148">
    <property type="entry name" value="ENOLASE"/>
</dbReference>
<dbReference type="SFLD" id="SFLDS00001">
    <property type="entry name" value="Enolase"/>
    <property type="match status" value="1"/>
</dbReference>
<dbReference type="SFLD" id="SFLDF00002">
    <property type="entry name" value="enolase"/>
    <property type="match status" value="1"/>
</dbReference>
<dbReference type="SMART" id="SM01192">
    <property type="entry name" value="Enolase_C"/>
    <property type="match status" value="1"/>
</dbReference>
<dbReference type="SMART" id="SM01193">
    <property type="entry name" value="Enolase_N"/>
    <property type="match status" value="1"/>
</dbReference>
<dbReference type="SUPFAM" id="SSF51604">
    <property type="entry name" value="Enolase C-terminal domain-like"/>
    <property type="match status" value="1"/>
</dbReference>
<dbReference type="SUPFAM" id="SSF54826">
    <property type="entry name" value="Enolase N-terminal domain-like"/>
    <property type="match status" value="1"/>
</dbReference>
<dbReference type="PROSITE" id="PS00164">
    <property type="entry name" value="ENOLASE"/>
    <property type="match status" value="1"/>
</dbReference>
<accession>A0M568</accession>
<sequence length="429" mass="46249">MSAILDIHARQIFDSRGNPTVEVDVYTENGIMGRAAVPSGASTGEHEAVELRDGGKDFMGKGVQKAVDNVNGEIADHLLGFSVFEQNLIDQTMIDLDGTPNKSKLGANAILGVSLAVAKAAANELNMPLYRYVGGVSANTLPVPMMNIINGGSHSDAPIAFQEFMIMPVMADSFSHALKMGTEIFHNLKNVLHDRGLSTAVGDEGGFAPTLDGTEDALDTILKAIEKAGYKPGKEVMIALDCAAAEFFVDGKYDYTKFEGDKGKVRTSEEQADYLAELASKYPIISIEDGMDENDWEGWKAVTDKIGDKVQLVGDDLFVTNVERLGRGIKESIANSILIKVNQIGTLTETIAAVNMAHNAGYTSVMSHRSGETEDNTIADLAVALNTGQIKTGSASRSDRMAKYNQLLRIEEELGDVAFYPQDKAFKIK</sequence>
<feature type="chain" id="PRO_0000280850" description="Enolase">
    <location>
        <begin position="1"/>
        <end position="429"/>
    </location>
</feature>
<feature type="active site" description="Proton donor" evidence="1">
    <location>
        <position position="204"/>
    </location>
</feature>
<feature type="active site" description="Proton acceptor" evidence="1">
    <location>
        <position position="340"/>
    </location>
</feature>
<feature type="binding site" evidence="1">
    <location>
        <position position="162"/>
    </location>
    <ligand>
        <name>(2R)-2-phosphoglycerate</name>
        <dbReference type="ChEBI" id="CHEBI:58289"/>
    </ligand>
</feature>
<feature type="binding site" evidence="1">
    <location>
        <position position="241"/>
    </location>
    <ligand>
        <name>Mg(2+)</name>
        <dbReference type="ChEBI" id="CHEBI:18420"/>
    </ligand>
</feature>
<feature type="binding site" evidence="1">
    <location>
        <position position="288"/>
    </location>
    <ligand>
        <name>Mg(2+)</name>
        <dbReference type="ChEBI" id="CHEBI:18420"/>
    </ligand>
</feature>
<feature type="binding site" evidence="1">
    <location>
        <position position="315"/>
    </location>
    <ligand>
        <name>Mg(2+)</name>
        <dbReference type="ChEBI" id="CHEBI:18420"/>
    </ligand>
</feature>
<feature type="binding site" evidence="1">
    <location>
        <position position="340"/>
    </location>
    <ligand>
        <name>(2R)-2-phosphoglycerate</name>
        <dbReference type="ChEBI" id="CHEBI:58289"/>
    </ligand>
</feature>
<feature type="binding site" evidence="1">
    <location>
        <position position="369"/>
    </location>
    <ligand>
        <name>(2R)-2-phosphoglycerate</name>
        <dbReference type="ChEBI" id="CHEBI:58289"/>
    </ligand>
</feature>
<feature type="binding site" evidence="1">
    <location>
        <position position="370"/>
    </location>
    <ligand>
        <name>(2R)-2-phosphoglycerate</name>
        <dbReference type="ChEBI" id="CHEBI:58289"/>
    </ligand>
</feature>
<feature type="binding site" evidence="1">
    <location>
        <position position="391"/>
    </location>
    <ligand>
        <name>(2R)-2-phosphoglycerate</name>
        <dbReference type="ChEBI" id="CHEBI:58289"/>
    </ligand>
</feature>
<proteinExistence type="inferred from homology"/>